<evidence type="ECO:0000255" key="1"/>
<evidence type="ECO:0000305" key="2"/>
<organism>
    <name type="scientific">Acanthamoeba polyphaga mimivirus</name>
    <name type="common">APMV</name>
    <dbReference type="NCBI Taxonomy" id="212035"/>
    <lineage>
        <taxon>Viruses</taxon>
        <taxon>Varidnaviria</taxon>
        <taxon>Bamfordvirae</taxon>
        <taxon>Nucleocytoviricota</taxon>
        <taxon>Megaviricetes</taxon>
        <taxon>Imitervirales</taxon>
        <taxon>Mimiviridae</taxon>
        <taxon>Megamimivirinae</taxon>
        <taxon>Mimivirus</taxon>
        <taxon>Mimivirus bradfordmassiliense</taxon>
    </lineage>
</organism>
<sequence length="281" mass="33489">MSSYAYVTVIYGNNIYLTGALVLGYTLQQTNTKYDRVILATKDVSEEYRSYLKKYYTHIIDIDYVKVNEDIFLEENTRFHDVFTKLSCLSLTQYDKIILLDLDMIIAKNIDHLFKLSAPAACLKRFHIPYGQKIPPKMICSNGKLVGSINAGLMLLEPDKREWEDIKKDIVKENFIGKFKYPEQDYLSLRYCNKWTSITFNYNFQFGLTHRVKKYHYTIDNIYVIHFSSSYKPWNRLNSDKSLREDETDFFDQHIKYYNLWMNIYSKIKHDFSKNDIKLPY</sequence>
<keyword id="KW-0472">Membrane</keyword>
<keyword id="KW-1185">Reference proteome</keyword>
<keyword id="KW-0812">Transmembrane</keyword>
<keyword id="KW-1133">Transmembrane helix</keyword>
<accession>Q5UNW1</accession>
<organismHost>
    <name type="scientific">Acanthamoeba polyphaga</name>
    <name type="common">Amoeba</name>
    <dbReference type="NCBI Taxonomy" id="5757"/>
</organismHost>
<proteinExistence type="predicted"/>
<feature type="chain" id="PRO_0000244053" description="Uncharacterized protein R707">
    <location>
        <begin position="1"/>
        <end position="281"/>
    </location>
</feature>
<feature type="transmembrane region" description="Helical" evidence="1">
    <location>
        <begin position="5"/>
        <end position="27"/>
    </location>
</feature>
<name>YR707_MIMIV</name>
<reference key="1">
    <citation type="journal article" date="2004" name="Science">
        <title>The 1.2-megabase genome sequence of Mimivirus.</title>
        <authorList>
            <person name="Raoult D."/>
            <person name="Audic S."/>
            <person name="Robert C."/>
            <person name="Abergel C."/>
            <person name="Renesto P."/>
            <person name="Ogata H."/>
            <person name="La Scola B."/>
            <person name="Susan M."/>
            <person name="Claverie J.-M."/>
        </authorList>
    </citation>
    <scope>NUCLEOTIDE SEQUENCE [LARGE SCALE GENOMIC DNA]</scope>
    <source>
        <strain>Rowbotham-Bradford</strain>
    </source>
</reference>
<comment type="subcellular location">
    <subcellularLocation>
        <location evidence="2">Membrane</location>
        <topology evidence="2">Single-pass membrane protein</topology>
    </subcellularLocation>
</comment>
<protein>
    <recommendedName>
        <fullName>Uncharacterized protein R707</fullName>
    </recommendedName>
</protein>
<dbReference type="EMBL" id="AY653733">
    <property type="protein sequence ID" value="AAV50967.1"/>
    <property type="molecule type" value="Genomic_DNA"/>
</dbReference>
<dbReference type="SMR" id="Q5UNW1"/>
<dbReference type="CAZy" id="GT8">
    <property type="family name" value="Glycosyltransferase Family 8"/>
</dbReference>
<dbReference type="KEGG" id="vg:9925360"/>
<dbReference type="OrthoDB" id="8852at10239"/>
<dbReference type="Proteomes" id="UP000001134">
    <property type="component" value="Genome"/>
</dbReference>
<dbReference type="GO" id="GO:0016020">
    <property type="term" value="C:membrane"/>
    <property type="evidence" value="ECO:0007669"/>
    <property type="project" value="UniProtKB-SubCell"/>
</dbReference>
<dbReference type="GO" id="GO:0016757">
    <property type="term" value="F:glycosyltransferase activity"/>
    <property type="evidence" value="ECO:0007669"/>
    <property type="project" value="InterPro"/>
</dbReference>
<dbReference type="Gene3D" id="3.90.550.10">
    <property type="entry name" value="Spore Coat Polysaccharide Biosynthesis Protein SpsA, Chain A"/>
    <property type="match status" value="1"/>
</dbReference>
<dbReference type="InterPro" id="IPR002495">
    <property type="entry name" value="Glyco_trans_8"/>
</dbReference>
<dbReference type="InterPro" id="IPR050587">
    <property type="entry name" value="GNT1/Glycosyltrans_8"/>
</dbReference>
<dbReference type="InterPro" id="IPR029044">
    <property type="entry name" value="Nucleotide-diphossugar_trans"/>
</dbReference>
<dbReference type="PANTHER" id="PTHR11183">
    <property type="entry name" value="GLYCOGENIN SUBFAMILY MEMBER"/>
    <property type="match status" value="1"/>
</dbReference>
<dbReference type="Pfam" id="PF01501">
    <property type="entry name" value="Glyco_transf_8"/>
    <property type="match status" value="1"/>
</dbReference>
<dbReference type="SUPFAM" id="SSF53448">
    <property type="entry name" value="Nucleotide-diphospho-sugar transferases"/>
    <property type="match status" value="1"/>
</dbReference>
<gene>
    <name type="ordered locus">MIMI_R707</name>
</gene>